<name>VATB_BORBZ</name>
<sequence>MKRVYSKIESIAGNVITVTAQGIKYGELAIVKAKDTSSLAEVIKLDREKVSLQVYGGTRGVSTSDEIKFLGHSMQVSFSDNLLGRIFDGSGNPRDGGPSLDDNLIEIGGPSANPTKRIVPRNMIRTGLPMIDVFNTLVESQKLPIFSVSGEPYNELLIRIALQAEVDLIILGGMGLKHDDYLTFKDSLEKGGALSRAIFFVHTANDSVVESLTVPDISLSVAEKFALKGKKVLVLLTDMTNFADAMKEISITMEQVPSNRGYPGDLYSQLAYRYEKAIDFEGAGSITILAVTTMPGDDVTHPVPDNTGYITEGQYYLKGGRIEPFGSLSRLKQMVNSRTRDDHRTIMDSMIKLYASSKESVEKKAMGFNMTKWDEKLLKYSNMFESKMMDLSVNIPLEEALDLGWSILASCFSPKETGIKTDLIEKYWPKKETY</sequence>
<gene>
    <name evidence="1" type="primary">atpB</name>
    <name type="ordered locus">BbuZS7_0093</name>
</gene>
<evidence type="ECO:0000255" key="1">
    <source>
        <dbReference type="HAMAP-Rule" id="MF_00310"/>
    </source>
</evidence>
<organism>
    <name type="scientific">Borreliella burgdorferi (strain ZS7)</name>
    <name type="common">Borrelia burgdorferi</name>
    <dbReference type="NCBI Taxonomy" id="445985"/>
    <lineage>
        <taxon>Bacteria</taxon>
        <taxon>Pseudomonadati</taxon>
        <taxon>Spirochaetota</taxon>
        <taxon>Spirochaetia</taxon>
        <taxon>Spirochaetales</taxon>
        <taxon>Borreliaceae</taxon>
        <taxon>Borreliella</taxon>
    </lineage>
</organism>
<feature type="chain" id="PRO_1000119524" description="V-type ATP synthase beta chain">
    <location>
        <begin position="1"/>
        <end position="434"/>
    </location>
</feature>
<reference key="1">
    <citation type="journal article" date="2011" name="J. Bacteriol.">
        <title>Whole-genome sequences of thirteen isolates of Borrelia burgdorferi.</title>
        <authorList>
            <person name="Schutzer S.E."/>
            <person name="Fraser-Liggett C.M."/>
            <person name="Casjens S.R."/>
            <person name="Qiu W.G."/>
            <person name="Dunn J.J."/>
            <person name="Mongodin E.F."/>
            <person name="Luft B.J."/>
        </authorList>
    </citation>
    <scope>NUCLEOTIDE SEQUENCE [LARGE SCALE GENOMIC DNA]</scope>
    <source>
        <strain>ZS7</strain>
    </source>
</reference>
<keyword id="KW-0066">ATP synthesis</keyword>
<keyword id="KW-0375">Hydrogen ion transport</keyword>
<keyword id="KW-0406">Ion transport</keyword>
<keyword id="KW-0813">Transport</keyword>
<protein>
    <recommendedName>
        <fullName evidence="1">V-type ATP synthase beta chain</fullName>
    </recommendedName>
    <alternativeName>
        <fullName evidence="1">V-ATPase subunit B</fullName>
    </alternativeName>
</protein>
<dbReference type="EMBL" id="CP001205">
    <property type="protein sequence ID" value="ACK74921.1"/>
    <property type="molecule type" value="Genomic_DNA"/>
</dbReference>
<dbReference type="RefSeq" id="WP_002556695.1">
    <property type="nucleotide sequence ID" value="NC_011728.1"/>
</dbReference>
<dbReference type="SMR" id="B7J126"/>
<dbReference type="KEGG" id="bbz:BbuZS7_0093"/>
<dbReference type="HOGENOM" id="CLU_022916_2_0_12"/>
<dbReference type="Proteomes" id="UP000006901">
    <property type="component" value="Chromosome"/>
</dbReference>
<dbReference type="GO" id="GO:0005524">
    <property type="term" value="F:ATP binding"/>
    <property type="evidence" value="ECO:0007669"/>
    <property type="project" value="UniProtKB-UniRule"/>
</dbReference>
<dbReference type="GO" id="GO:0046933">
    <property type="term" value="F:proton-transporting ATP synthase activity, rotational mechanism"/>
    <property type="evidence" value="ECO:0007669"/>
    <property type="project" value="UniProtKB-UniRule"/>
</dbReference>
<dbReference type="GO" id="GO:0042777">
    <property type="term" value="P:proton motive force-driven plasma membrane ATP synthesis"/>
    <property type="evidence" value="ECO:0007669"/>
    <property type="project" value="UniProtKB-UniRule"/>
</dbReference>
<dbReference type="CDD" id="cd18118">
    <property type="entry name" value="ATP-synt_V_A-type_beta_N"/>
    <property type="match status" value="1"/>
</dbReference>
<dbReference type="CDD" id="cd01135">
    <property type="entry name" value="V_A-ATPase_B"/>
    <property type="match status" value="1"/>
</dbReference>
<dbReference type="Gene3D" id="3.40.50.12240">
    <property type="match status" value="1"/>
</dbReference>
<dbReference type="HAMAP" id="MF_00310">
    <property type="entry name" value="ATP_synth_B_arch"/>
    <property type="match status" value="1"/>
</dbReference>
<dbReference type="InterPro" id="IPR055190">
    <property type="entry name" value="ATP-synt_VA_C"/>
</dbReference>
<dbReference type="InterPro" id="IPR004100">
    <property type="entry name" value="ATPase_F1/V1/A1_a/bsu_N"/>
</dbReference>
<dbReference type="InterPro" id="IPR000194">
    <property type="entry name" value="ATPase_F1/V1/A1_a/bsu_nucl-bd"/>
</dbReference>
<dbReference type="InterPro" id="IPR027417">
    <property type="entry name" value="P-loop_NTPase"/>
</dbReference>
<dbReference type="InterPro" id="IPR022879">
    <property type="entry name" value="V-ATPase_su_B/beta"/>
</dbReference>
<dbReference type="NCBIfam" id="NF002555">
    <property type="entry name" value="PRK02118.1"/>
    <property type="match status" value="1"/>
</dbReference>
<dbReference type="NCBIfam" id="NF003235">
    <property type="entry name" value="PRK04196.1"/>
    <property type="match status" value="1"/>
</dbReference>
<dbReference type="PANTHER" id="PTHR43389">
    <property type="entry name" value="V-TYPE PROTON ATPASE SUBUNIT B"/>
    <property type="match status" value="1"/>
</dbReference>
<dbReference type="PANTHER" id="PTHR43389:SF4">
    <property type="entry name" value="V-TYPE PROTON ATPASE SUBUNIT B"/>
    <property type="match status" value="1"/>
</dbReference>
<dbReference type="Pfam" id="PF00006">
    <property type="entry name" value="ATP-synt_ab"/>
    <property type="match status" value="1"/>
</dbReference>
<dbReference type="Pfam" id="PF02874">
    <property type="entry name" value="ATP-synt_ab_N"/>
    <property type="match status" value="1"/>
</dbReference>
<dbReference type="Pfam" id="PF22919">
    <property type="entry name" value="ATP-synt_VA_C"/>
    <property type="match status" value="1"/>
</dbReference>
<dbReference type="SUPFAM" id="SSF52540">
    <property type="entry name" value="P-loop containing nucleoside triphosphate hydrolases"/>
    <property type="match status" value="1"/>
</dbReference>
<accession>B7J126</accession>
<proteinExistence type="inferred from homology"/>
<comment type="function">
    <text evidence="1">Produces ATP from ADP in the presence of a proton gradient across the membrane. The V-type beta chain is a regulatory subunit.</text>
</comment>
<comment type="similarity">
    <text evidence="1">Belongs to the ATPase alpha/beta chains family.</text>
</comment>